<organism>
    <name type="scientific">Conus striatus</name>
    <name type="common">Striated cone</name>
    <dbReference type="NCBI Taxonomy" id="6493"/>
    <lineage>
        <taxon>Eukaryota</taxon>
        <taxon>Metazoa</taxon>
        <taxon>Spiralia</taxon>
        <taxon>Lophotrochozoa</taxon>
        <taxon>Mollusca</taxon>
        <taxon>Gastropoda</taxon>
        <taxon>Caenogastropoda</taxon>
        <taxon>Neogastropoda</taxon>
        <taxon>Conoidea</taxon>
        <taxon>Conidae</taxon>
        <taxon>Conus</taxon>
        <taxon>Pionoconus</taxon>
    </lineage>
</organism>
<sequence>APALVVTATTNCCGYTGPACHPCLCTQTC</sequence>
<feature type="peptide" id="PRO_0000458003" description="Conotoxin SIVC" evidence="3">
    <location>
        <begin position="1"/>
        <end position="29"/>
    </location>
</feature>
<feature type="modified residue" description="N-acetylalanine; partial" evidence="3">
    <location>
        <position position="1"/>
    </location>
</feature>
<feature type="modified residue" description="4-hydroxyproline" evidence="3">
    <location>
        <position position="2"/>
    </location>
</feature>
<feature type="modified residue" description="4-hydroxyproline" evidence="3">
    <location>
        <position position="18"/>
    </location>
</feature>
<feature type="modified residue" description="4-hydroxyproline" evidence="3">
    <location>
        <position position="22"/>
    </location>
</feature>
<feature type="modified residue" description="Cysteine amide" evidence="3">
    <location>
        <position position="29"/>
    </location>
</feature>
<feature type="glycosylation site" description="O-linked (HexNAc...) threonine" evidence="3">
    <location>
        <position position="7"/>
    </location>
</feature>
<feature type="glycosylation site" description="O-linked (HexNAc...) threonine" evidence="3">
    <location>
        <position position="9"/>
    </location>
</feature>
<feature type="unsure residue" description="Leu or Iso" evidence="8">
    <location>
        <position position="4"/>
    </location>
</feature>
<feature type="unsure residue" description="Leu or Iso" evidence="8">
    <location>
        <position position="24"/>
    </location>
</feature>
<comment type="function">
    <text evidence="6">Probable neurotoxin with ion channel inhibitor activity.</text>
</comment>
<comment type="subcellular location">
    <subcellularLocation>
        <location evidence="3">Secreted</location>
    </subcellularLocation>
</comment>
<comment type="tissue specificity">
    <text evidence="2">Expressed by the venom duct. Low expression in the distal venom duct sections.</text>
</comment>
<comment type="domain">
    <text evidence="6">The cysteine framework is IV (CC-C-C-C-C).</text>
</comment>
<comment type="PTM">
    <text evidence="3">O-linked glycans consist of Hex4-HexNAc2 hexasaccharides.</text>
</comment>
<comment type="PTM">
    <text evidence="3">N-terminus is found to be free and N-acetylated, depending on the fraction studied.</text>
</comment>
<comment type="PTM">
    <text evidence="3">Contains 3 disulfide bonds.</text>
</comment>
<comment type="similarity">
    <text evidence="1 7">Belongs to the conotoxin A superfamily.</text>
</comment>
<comment type="caution">
    <text evidence="2 3">Found in the venom of the population of Pionoconus striatus from Mayotte island, but not detected in the venom of Australian cones. Nevertheless, it is weakly detected at the transcriptomic level in Australian cones.</text>
</comment>
<comment type="online information" name="National Center for Biotechnology Information (NCBI)">
    <link uri="https://www.ncbi.nlm.nih.gov/bioproject/PRJNA730990"/>
</comment>
<evidence type="ECO:0000250" key="1">
    <source>
        <dbReference type="UniProtKB" id="P0C1X1"/>
    </source>
</evidence>
<evidence type="ECO:0000269" key="2">
    <source>
    </source>
</evidence>
<evidence type="ECO:0000269" key="3">
    <source>
    </source>
</evidence>
<evidence type="ECO:0000303" key="4">
    <source>
    </source>
</evidence>
<evidence type="ECO:0000303" key="5">
    <source>
    </source>
</evidence>
<evidence type="ECO:0000305" key="6"/>
<evidence type="ECO:0000305" key="7">
    <source>
    </source>
</evidence>
<evidence type="ECO:0000305" key="8">
    <source>
    </source>
</evidence>
<reference key="1">
    <citation type="journal article" date="2021" name="Sci. Rep.">
        <title>Venom duct origins of prey capture and defensive conotoxins in piscivorous Conus striatus.</title>
        <authorList>
            <person name="Himaya S.W.A."/>
            <person name="Jin A.H."/>
            <person name="Hamilton B."/>
            <person name="Rai S.K."/>
            <person name="Alewood P."/>
            <person name="Lewis R.J."/>
        </authorList>
    </citation>
    <scope>NUCLEOTIDE SEQUENCE [MRNA]</scope>
    <scope>TISSUE SPECIFICITY</scope>
    <source>
        <strain>Isolate Australia</strain>
        <tissue>Venom duct</tissue>
    </source>
</reference>
<reference key="2">
    <citation type="journal article" date="2022" name="Toxins">
        <title>Proteomic analysis of the predatory venom of Conus striatus reveals novel and population-specific kappaA-conotoxin SIVC.</title>
        <authorList>
            <person name="Saintmont F."/>
            <person name="Cazals G."/>
            <person name="Bich C."/>
            <person name="Dutertre S."/>
        </authorList>
    </citation>
    <scope>PROTEIN SEQUENCE</scope>
    <scope>PARTIAL ACETYLATION AT ALA-1</scope>
    <scope>HYDROXYLATION AT PRO-2; PRO-18 AND PRO-22</scope>
    <scope>GLYCOSYLATION AT THR-7 AND THR-9</scope>
    <scope>AMIDATION AT CYS-29</scope>
    <source>
        <strain>Isolate Mayotte Island</strain>
        <tissue>Venom</tissue>
    </source>
</reference>
<protein>
    <recommendedName>
        <fullName evidence="6">Conotoxin SIVC</fullName>
    </recommendedName>
    <alternativeName>
        <fullName evidence="5">KappaA-conotoxin SIVC</fullName>
    </alternativeName>
    <alternativeName>
        <fullName evidence="4">STR18</fullName>
    </alternativeName>
</protein>
<keyword id="KW-0007">Acetylation</keyword>
<keyword id="KW-0027">Amidation</keyword>
<keyword id="KW-0903">Direct protein sequencing</keyword>
<keyword id="KW-1015">Disulfide bond</keyword>
<keyword id="KW-0325">Glycoprotein</keyword>
<keyword id="KW-0379">Hydroxylation</keyword>
<keyword id="KW-0872">Ion channel impairing toxin</keyword>
<keyword id="KW-0528">Neurotoxin</keyword>
<keyword id="KW-0964">Secreted</keyword>
<keyword id="KW-0800">Toxin</keyword>
<accession>P0DQY7</accession>
<proteinExistence type="evidence at protein level"/>
<dbReference type="SMR" id="P0DQY7"/>
<dbReference type="iPTMnet" id="P0DQY7"/>
<dbReference type="GO" id="GO:0005576">
    <property type="term" value="C:extracellular region"/>
    <property type="evidence" value="ECO:0007669"/>
    <property type="project" value="UniProtKB-SubCell"/>
</dbReference>
<dbReference type="GO" id="GO:0099106">
    <property type="term" value="F:ion channel regulator activity"/>
    <property type="evidence" value="ECO:0007669"/>
    <property type="project" value="UniProtKB-KW"/>
</dbReference>
<dbReference type="GO" id="GO:0090729">
    <property type="term" value="F:toxin activity"/>
    <property type="evidence" value="ECO:0007669"/>
    <property type="project" value="UniProtKB-KW"/>
</dbReference>
<name>CA4C_CONST</name>